<dbReference type="EMBL" id="BC109863">
    <property type="protein sequence ID" value="AAI09864.1"/>
    <property type="molecule type" value="mRNA"/>
</dbReference>
<dbReference type="RefSeq" id="NP_001069769.1">
    <property type="nucleotide sequence ID" value="NM_001076301.2"/>
</dbReference>
<dbReference type="SMR" id="Q32KY0"/>
<dbReference type="FunCoup" id="Q32KY0">
    <property type="interactions" value="185"/>
</dbReference>
<dbReference type="STRING" id="9913.ENSBTAP00000043789"/>
<dbReference type="GlyCosmos" id="Q32KY0">
    <property type="glycosylation" value="2 sites, No reported glycans"/>
</dbReference>
<dbReference type="GlyGen" id="Q32KY0">
    <property type="glycosylation" value="2 sites"/>
</dbReference>
<dbReference type="PaxDb" id="9913-ENSBTAP00000043789"/>
<dbReference type="GeneID" id="613972"/>
<dbReference type="KEGG" id="bta:613972"/>
<dbReference type="CTD" id="347"/>
<dbReference type="eggNOG" id="KOG4824">
    <property type="taxonomic scope" value="Eukaryota"/>
</dbReference>
<dbReference type="InParanoid" id="Q32KY0"/>
<dbReference type="OrthoDB" id="565904at2759"/>
<dbReference type="Proteomes" id="UP000009136">
    <property type="component" value="Unplaced"/>
</dbReference>
<dbReference type="GO" id="GO:0005737">
    <property type="term" value="C:cytoplasm"/>
    <property type="evidence" value="ECO:0000318"/>
    <property type="project" value="GO_Central"/>
</dbReference>
<dbReference type="GO" id="GO:0022626">
    <property type="term" value="C:cytosolic ribosome"/>
    <property type="evidence" value="ECO:0000250"/>
    <property type="project" value="UniProtKB"/>
</dbReference>
<dbReference type="GO" id="GO:0030425">
    <property type="term" value="C:dendrite"/>
    <property type="evidence" value="ECO:0000250"/>
    <property type="project" value="UniProtKB"/>
</dbReference>
<dbReference type="GO" id="GO:0005615">
    <property type="term" value="C:extracellular space"/>
    <property type="evidence" value="ECO:0000250"/>
    <property type="project" value="UniProtKB"/>
</dbReference>
<dbReference type="GO" id="GO:0043025">
    <property type="term" value="C:neuronal cell body"/>
    <property type="evidence" value="ECO:0000250"/>
    <property type="project" value="UniProtKB"/>
</dbReference>
<dbReference type="GO" id="GO:0048471">
    <property type="term" value="C:perinuclear region of cytoplasm"/>
    <property type="evidence" value="ECO:0000250"/>
    <property type="project" value="UniProtKB"/>
</dbReference>
<dbReference type="GO" id="GO:0015485">
    <property type="term" value="F:cholesterol binding"/>
    <property type="evidence" value="ECO:0000250"/>
    <property type="project" value="UniProtKB"/>
</dbReference>
<dbReference type="GO" id="GO:0007420">
    <property type="term" value="P:brain development"/>
    <property type="evidence" value="ECO:0007669"/>
    <property type="project" value="InterPro"/>
</dbReference>
<dbReference type="GO" id="GO:0006006">
    <property type="term" value="P:glucose metabolic process"/>
    <property type="evidence" value="ECO:0000250"/>
    <property type="project" value="UniProtKB"/>
</dbReference>
<dbReference type="GO" id="GO:0006629">
    <property type="term" value="P:lipid metabolic process"/>
    <property type="evidence" value="ECO:0000250"/>
    <property type="project" value="UniProtKB"/>
</dbReference>
<dbReference type="GO" id="GO:0006869">
    <property type="term" value="P:lipid transport"/>
    <property type="evidence" value="ECO:0007669"/>
    <property type="project" value="InterPro"/>
</dbReference>
<dbReference type="GO" id="GO:1900016">
    <property type="term" value="P:negative regulation of cytokine production involved in inflammatory response"/>
    <property type="evidence" value="ECO:0000250"/>
    <property type="project" value="UniProtKB"/>
</dbReference>
<dbReference type="GO" id="GO:0051895">
    <property type="term" value="P:negative regulation of focal adhesion assembly"/>
    <property type="evidence" value="ECO:0000250"/>
    <property type="project" value="UniProtKB"/>
</dbReference>
<dbReference type="GO" id="GO:0060588">
    <property type="term" value="P:negative regulation of lipoprotein lipid oxidation"/>
    <property type="evidence" value="ECO:0000250"/>
    <property type="project" value="UniProtKB"/>
</dbReference>
<dbReference type="GO" id="GO:0071638">
    <property type="term" value="P:negative regulation of monocyte chemotactic protein-1 production"/>
    <property type="evidence" value="ECO:0000250"/>
    <property type="project" value="UniProtKB"/>
</dbReference>
<dbReference type="GO" id="GO:0010642">
    <property type="term" value="P:negative regulation of platelet-derived growth factor receptor signaling pathway"/>
    <property type="evidence" value="ECO:0000250"/>
    <property type="project" value="UniProtKB"/>
</dbReference>
<dbReference type="GO" id="GO:0042308">
    <property type="term" value="P:negative regulation of protein import into nucleus"/>
    <property type="evidence" value="ECO:0000250"/>
    <property type="project" value="UniProtKB"/>
</dbReference>
<dbReference type="GO" id="GO:0048662">
    <property type="term" value="P:negative regulation of smooth muscle cell proliferation"/>
    <property type="evidence" value="ECO:0000250"/>
    <property type="project" value="UniProtKB"/>
</dbReference>
<dbReference type="GO" id="GO:2000098">
    <property type="term" value="P:negative regulation of smooth muscle cell-matrix adhesion"/>
    <property type="evidence" value="ECO:0000250"/>
    <property type="project" value="UniProtKB"/>
</dbReference>
<dbReference type="GO" id="GO:2000405">
    <property type="term" value="P:negative regulation of T cell migration"/>
    <property type="evidence" value="ECO:0000250"/>
    <property type="project" value="UniProtKB"/>
</dbReference>
<dbReference type="GO" id="GO:0014012">
    <property type="term" value="P:peripheral nervous system axon regeneration"/>
    <property type="evidence" value="ECO:0000250"/>
    <property type="project" value="UniProtKB"/>
</dbReference>
<dbReference type="GO" id="GO:0048678">
    <property type="term" value="P:response to axon injury"/>
    <property type="evidence" value="ECO:0000250"/>
    <property type="project" value="UniProtKB"/>
</dbReference>
<dbReference type="GO" id="GO:0000302">
    <property type="term" value="P:response to reactive oxygen species"/>
    <property type="evidence" value="ECO:0000250"/>
    <property type="project" value="UniProtKB"/>
</dbReference>
<dbReference type="GO" id="GO:0042246">
    <property type="term" value="P:tissue regeneration"/>
    <property type="evidence" value="ECO:0000250"/>
    <property type="project" value="UniProtKB"/>
</dbReference>
<dbReference type="CDD" id="cd19437">
    <property type="entry name" value="lipocalin_apoD-like"/>
    <property type="match status" value="1"/>
</dbReference>
<dbReference type="FunFam" id="2.40.128.20:FF:000003">
    <property type="entry name" value="Apolipoprotein D"/>
    <property type="match status" value="1"/>
</dbReference>
<dbReference type="Gene3D" id="2.40.128.20">
    <property type="match status" value="1"/>
</dbReference>
<dbReference type="InterPro" id="IPR026222">
    <property type="entry name" value="ApoD_vertbrte"/>
</dbReference>
<dbReference type="InterPro" id="IPR002969">
    <property type="entry name" value="ApolipopD"/>
</dbReference>
<dbReference type="InterPro" id="IPR012674">
    <property type="entry name" value="Calycin"/>
</dbReference>
<dbReference type="InterPro" id="IPR022271">
    <property type="entry name" value="Lipocalin_ApoD"/>
</dbReference>
<dbReference type="InterPro" id="IPR022272">
    <property type="entry name" value="Lipocalin_CS"/>
</dbReference>
<dbReference type="InterPro" id="IPR000566">
    <property type="entry name" value="Lipocln_cytosolic_FA-bd_dom"/>
</dbReference>
<dbReference type="PANTHER" id="PTHR10612">
    <property type="entry name" value="APOLIPOPROTEIN D"/>
    <property type="match status" value="1"/>
</dbReference>
<dbReference type="PANTHER" id="PTHR10612:SF34">
    <property type="entry name" value="APOLIPOPROTEIN D"/>
    <property type="match status" value="1"/>
</dbReference>
<dbReference type="Pfam" id="PF00061">
    <property type="entry name" value="Lipocalin"/>
    <property type="match status" value="1"/>
</dbReference>
<dbReference type="PIRSF" id="PIRSF036893">
    <property type="entry name" value="Lipocalin_ApoD"/>
    <property type="match status" value="1"/>
</dbReference>
<dbReference type="PRINTS" id="PR02058">
    <property type="entry name" value="APODVERTBRTE"/>
</dbReference>
<dbReference type="PRINTS" id="PR01219">
    <property type="entry name" value="APOLIPOPROTD"/>
</dbReference>
<dbReference type="PRINTS" id="PR00179">
    <property type="entry name" value="LIPOCALIN"/>
</dbReference>
<dbReference type="SUPFAM" id="SSF50814">
    <property type="entry name" value="Lipocalins"/>
    <property type="match status" value="1"/>
</dbReference>
<dbReference type="PROSITE" id="PS00213">
    <property type="entry name" value="LIPOCALIN"/>
    <property type="match status" value="1"/>
</dbReference>
<proteinExistence type="evidence at transcript level"/>
<comment type="function">
    <text evidence="1">APOD occurs in the macromolecular complex with lecithin-transport and binding of bilin. Appears to be able to transport a variety of ligands in a number of different contexts (By similarity).</text>
</comment>
<comment type="subunit">
    <text evidence="1">Homodimer.</text>
</comment>
<comment type="subcellular location">
    <subcellularLocation>
        <location evidence="1">Secreted</location>
    </subcellularLocation>
</comment>
<comment type="similarity">
    <text evidence="4">Belongs to the calycin superfamily. Lipocalin family.</text>
</comment>
<evidence type="ECO:0000250" key="1"/>
<evidence type="ECO:0000250" key="2">
    <source>
        <dbReference type="UniProtKB" id="P05090"/>
    </source>
</evidence>
<evidence type="ECO:0000255" key="3"/>
<evidence type="ECO:0000305" key="4"/>
<reference key="1">
    <citation type="submission" date="2005-11" db="EMBL/GenBank/DDBJ databases">
        <authorList>
            <consortium name="NIH - Mammalian Gene Collection (MGC) project"/>
        </authorList>
    </citation>
    <scope>NUCLEOTIDE SEQUENCE [LARGE SCALE MRNA]</scope>
    <source>
        <strain>Crossbred X Angus</strain>
        <tissue>Liver</tissue>
    </source>
</reference>
<accession>Q32KY0</accession>
<organism>
    <name type="scientific">Bos taurus</name>
    <name type="common">Bovine</name>
    <dbReference type="NCBI Taxonomy" id="9913"/>
    <lineage>
        <taxon>Eukaryota</taxon>
        <taxon>Metazoa</taxon>
        <taxon>Chordata</taxon>
        <taxon>Craniata</taxon>
        <taxon>Vertebrata</taxon>
        <taxon>Euteleostomi</taxon>
        <taxon>Mammalia</taxon>
        <taxon>Eutheria</taxon>
        <taxon>Laurasiatheria</taxon>
        <taxon>Artiodactyla</taxon>
        <taxon>Ruminantia</taxon>
        <taxon>Pecora</taxon>
        <taxon>Bovidae</taxon>
        <taxon>Bovinae</taxon>
        <taxon>Bos</taxon>
    </lineage>
</organism>
<keyword id="KW-1015">Disulfide bond</keyword>
<keyword id="KW-0325">Glycoprotein</keyword>
<keyword id="KW-0446">Lipid-binding</keyword>
<keyword id="KW-0873">Pyrrolidone carboxylic acid</keyword>
<keyword id="KW-1185">Reference proteome</keyword>
<keyword id="KW-0964">Secreted</keyword>
<keyword id="KW-0732">Signal</keyword>
<keyword id="KW-0813">Transport</keyword>
<sequence length="189" mass="21402">MVPVLLLLPALAGLFGAAEGQAFHLGKCPHPPVQENFDVNKYLGKWYEIEKIPVSFEKGSCIQANYSLKENGNVEVINKELRADGTVNQIEGEATPENITEPAKLAVKFFWFMPSAPYWVLATDYENYALVYSCTTIIWLFHMDHVWILGRNPYLPPETVTYLKDILTSNNIEVEKMTITDQVNCPESM</sequence>
<name>APOD_BOVIN</name>
<gene>
    <name type="primary">APOD</name>
</gene>
<protein>
    <recommendedName>
        <fullName>Apolipoprotein D</fullName>
        <shortName>Apo-D</shortName>
        <shortName>ApoD</shortName>
    </recommendedName>
</protein>
<feature type="signal peptide" evidence="1">
    <location>
        <begin position="1"/>
        <end position="20"/>
    </location>
</feature>
<feature type="chain" id="PRO_0000282337" description="Apolipoprotein D">
    <location>
        <begin position="21"/>
        <end position="189"/>
    </location>
</feature>
<feature type="modified residue" description="Pyrrolidone carboxylic acid" evidence="2">
    <location>
        <position position="21"/>
    </location>
</feature>
<feature type="glycosylation site" description="N-linked (GlcNAc...) asparagine" evidence="3">
    <location>
        <position position="65"/>
    </location>
</feature>
<feature type="glycosylation site" description="N-linked (GlcNAc...) asparagine" evidence="3">
    <location>
        <position position="98"/>
    </location>
</feature>
<feature type="disulfide bond" evidence="1">
    <location>
        <begin position="28"/>
        <end position="134"/>
    </location>
</feature>
<feature type="disulfide bond" evidence="1">
    <location>
        <begin position="61"/>
        <end position="185"/>
    </location>
</feature>